<sequence>MTHVEVVATIAPQLSIEETLIQKINHRIDAIDVLELRIDQIENVTVDQVAEMITKLKVMQDSFKLLVTYRTKLQGGYGQFINDLYLNLISDLANINGIDMIDIEWQADIDIEKHQRIIKHLQQYNKEVVISHHNFESTPPLDELQFIFFKMQKFNPEYVKLAVMPHNKNDVLNLLQAMSTFSDTMDCKVVGISMSKLGLISRTAQGVFGGALTYGCIGEPQAPGQIDVTDLKAQVTLY</sequence>
<evidence type="ECO:0000255" key="1">
    <source>
        <dbReference type="HAMAP-Rule" id="MF_00214"/>
    </source>
</evidence>
<accession>A6TZT3</accession>
<organism>
    <name type="scientific">Staphylococcus aureus (strain JH1)</name>
    <dbReference type="NCBI Taxonomy" id="359787"/>
    <lineage>
        <taxon>Bacteria</taxon>
        <taxon>Bacillati</taxon>
        <taxon>Bacillota</taxon>
        <taxon>Bacilli</taxon>
        <taxon>Bacillales</taxon>
        <taxon>Staphylococcaceae</taxon>
        <taxon>Staphylococcus</taxon>
    </lineage>
</organism>
<keyword id="KW-0028">Amino-acid biosynthesis</keyword>
<keyword id="KW-0057">Aromatic amino acid biosynthesis</keyword>
<keyword id="KW-0456">Lyase</keyword>
<keyword id="KW-0704">Schiff base</keyword>
<name>AROD_STAA2</name>
<reference key="1">
    <citation type="submission" date="2007-06" db="EMBL/GenBank/DDBJ databases">
        <title>Complete sequence of chromosome of Staphylococcus aureus subsp. aureus JH1.</title>
        <authorList>
            <consortium name="US DOE Joint Genome Institute"/>
            <person name="Copeland A."/>
            <person name="Lucas S."/>
            <person name="Lapidus A."/>
            <person name="Barry K."/>
            <person name="Detter J.C."/>
            <person name="Glavina del Rio T."/>
            <person name="Hammon N."/>
            <person name="Israni S."/>
            <person name="Dalin E."/>
            <person name="Tice H."/>
            <person name="Pitluck S."/>
            <person name="Chain P."/>
            <person name="Malfatti S."/>
            <person name="Shin M."/>
            <person name="Vergez L."/>
            <person name="Schmutz J."/>
            <person name="Larimer F."/>
            <person name="Land M."/>
            <person name="Hauser L."/>
            <person name="Kyrpides N."/>
            <person name="Ivanova N."/>
            <person name="Tomasz A."/>
            <person name="Richardson P."/>
        </authorList>
    </citation>
    <scope>NUCLEOTIDE SEQUENCE [LARGE SCALE GENOMIC DNA]</scope>
    <source>
        <strain>JH1</strain>
    </source>
</reference>
<feature type="chain" id="PRO_1000078048" description="3-dehydroquinate dehydratase">
    <location>
        <begin position="1"/>
        <end position="238"/>
    </location>
</feature>
<feature type="active site" description="Proton donor/acceptor" evidence="1">
    <location>
        <position position="133"/>
    </location>
</feature>
<feature type="active site" description="Schiff-base intermediate with substrate" evidence="1">
    <location>
        <position position="160"/>
    </location>
</feature>
<feature type="binding site" evidence="1">
    <location>
        <begin position="35"/>
        <end position="37"/>
    </location>
    <ligand>
        <name>3-dehydroquinate</name>
        <dbReference type="ChEBI" id="CHEBI:32364"/>
    </ligand>
</feature>
<feature type="binding site" evidence="1">
    <location>
        <position position="70"/>
    </location>
    <ligand>
        <name>3-dehydroquinate</name>
        <dbReference type="ChEBI" id="CHEBI:32364"/>
    </ligand>
</feature>
<feature type="binding site" evidence="1">
    <location>
        <position position="202"/>
    </location>
    <ligand>
        <name>3-dehydroquinate</name>
        <dbReference type="ChEBI" id="CHEBI:32364"/>
    </ligand>
</feature>
<feature type="binding site" evidence="1">
    <location>
        <position position="225"/>
    </location>
    <ligand>
        <name>3-dehydroquinate</name>
        <dbReference type="ChEBI" id="CHEBI:32364"/>
    </ligand>
</feature>
<protein>
    <recommendedName>
        <fullName evidence="1">3-dehydroquinate dehydratase</fullName>
        <shortName evidence="1">3-dehydroquinase</shortName>
        <ecNumber evidence="1">4.2.1.10</ecNumber>
    </recommendedName>
    <alternativeName>
        <fullName evidence="1">Type I DHQase</fullName>
    </alternativeName>
    <alternativeName>
        <fullName evidence="1">Type I dehydroquinase</fullName>
        <shortName evidence="1">DHQ1</shortName>
    </alternativeName>
</protein>
<dbReference type="EC" id="4.2.1.10" evidence="1"/>
<dbReference type="EMBL" id="CP000736">
    <property type="protein sequence ID" value="ABR51701.1"/>
    <property type="molecule type" value="Genomic_DNA"/>
</dbReference>
<dbReference type="SMR" id="A6TZT3"/>
<dbReference type="KEGG" id="sah:SaurJH1_0845"/>
<dbReference type="HOGENOM" id="CLU_064444_2_1_9"/>
<dbReference type="UniPathway" id="UPA00053">
    <property type="reaction ID" value="UER00086"/>
</dbReference>
<dbReference type="GO" id="GO:0003855">
    <property type="term" value="F:3-dehydroquinate dehydratase activity"/>
    <property type="evidence" value="ECO:0007669"/>
    <property type="project" value="UniProtKB-UniRule"/>
</dbReference>
<dbReference type="GO" id="GO:0046279">
    <property type="term" value="P:3,4-dihydroxybenzoate biosynthetic process"/>
    <property type="evidence" value="ECO:0007669"/>
    <property type="project" value="TreeGrafter"/>
</dbReference>
<dbReference type="GO" id="GO:0008652">
    <property type="term" value="P:amino acid biosynthetic process"/>
    <property type="evidence" value="ECO:0007669"/>
    <property type="project" value="UniProtKB-KW"/>
</dbReference>
<dbReference type="GO" id="GO:0009073">
    <property type="term" value="P:aromatic amino acid family biosynthetic process"/>
    <property type="evidence" value="ECO:0007669"/>
    <property type="project" value="UniProtKB-KW"/>
</dbReference>
<dbReference type="GO" id="GO:0009423">
    <property type="term" value="P:chorismate biosynthetic process"/>
    <property type="evidence" value="ECO:0007669"/>
    <property type="project" value="UniProtKB-UniRule"/>
</dbReference>
<dbReference type="CDD" id="cd00502">
    <property type="entry name" value="DHQase_I"/>
    <property type="match status" value="1"/>
</dbReference>
<dbReference type="FunFam" id="3.20.20.70:FF:000216">
    <property type="entry name" value="3-dehydroquinate dehydratase"/>
    <property type="match status" value="1"/>
</dbReference>
<dbReference type="Gene3D" id="3.20.20.70">
    <property type="entry name" value="Aldolase class I"/>
    <property type="match status" value="1"/>
</dbReference>
<dbReference type="HAMAP" id="MF_00214">
    <property type="entry name" value="AroD"/>
    <property type="match status" value="1"/>
</dbReference>
<dbReference type="InterPro" id="IPR013785">
    <property type="entry name" value="Aldolase_TIM"/>
</dbReference>
<dbReference type="InterPro" id="IPR001381">
    <property type="entry name" value="DHquinase_I"/>
</dbReference>
<dbReference type="InterPro" id="IPR050146">
    <property type="entry name" value="Type-I_3-dehydroquinase"/>
</dbReference>
<dbReference type="NCBIfam" id="TIGR01093">
    <property type="entry name" value="aroD"/>
    <property type="match status" value="1"/>
</dbReference>
<dbReference type="PANTHER" id="PTHR43699">
    <property type="entry name" value="3-DEHYDROQUINATE DEHYDRATASE"/>
    <property type="match status" value="1"/>
</dbReference>
<dbReference type="PANTHER" id="PTHR43699:SF1">
    <property type="entry name" value="3-DEHYDROQUINATE DEHYDRATASE"/>
    <property type="match status" value="1"/>
</dbReference>
<dbReference type="Pfam" id="PF01487">
    <property type="entry name" value="DHquinase_I"/>
    <property type="match status" value="1"/>
</dbReference>
<dbReference type="SUPFAM" id="SSF51569">
    <property type="entry name" value="Aldolase"/>
    <property type="match status" value="1"/>
</dbReference>
<comment type="function">
    <text evidence="1">Involved in the third step of the chorismate pathway, which leads to the biosynthesis of aromatic amino acids. Catalyzes the cis-dehydration of 3-dehydroquinate (DHQ) and introduces the first double bond of the aromatic ring to yield 3-dehydroshikimate.</text>
</comment>
<comment type="catalytic activity">
    <reaction evidence="1">
        <text>3-dehydroquinate = 3-dehydroshikimate + H2O</text>
        <dbReference type="Rhea" id="RHEA:21096"/>
        <dbReference type="ChEBI" id="CHEBI:15377"/>
        <dbReference type="ChEBI" id="CHEBI:16630"/>
        <dbReference type="ChEBI" id="CHEBI:32364"/>
        <dbReference type="EC" id="4.2.1.10"/>
    </reaction>
</comment>
<comment type="pathway">
    <text evidence="1">Metabolic intermediate biosynthesis; chorismate biosynthesis; chorismate from D-erythrose 4-phosphate and phosphoenolpyruvate: step 3/7.</text>
</comment>
<comment type="subunit">
    <text evidence="1">Homodimer.</text>
</comment>
<comment type="similarity">
    <text evidence="1">Belongs to the type-I 3-dehydroquinase family.</text>
</comment>
<gene>
    <name evidence="1" type="primary">aroD</name>
    <name type="ordered locus">SaurJH1_0845</name>
</gene>
<proteinExistence type="inferred from homology"/>